<gene>
    <name type="primary">PPC4-2</name>
    <name type="ordered locus">At2g25070</name>
    <name type="ORF">F13D4.1</name>
    <name type="ORF">F27C12</name>
</gene>
<comment type="catalytic activity">
    <reaction>
        <text>O-phospho-L-seryl-[protein] + H2O = L-seryl-[protein] + phosphate</text>
        <dbReference type="Rhea" id="RHEA:20629"/>
        <dbReference type="Rhea" id="RHEA-COMP:9863"/>
        <dbReference type="Rhea" id="RHEA-COMP:11604"/>
        <dbReference type="ChEBI" id="CHEBI:15377"/>
        <dbReference type="ChEBI" id="CHEBI:29999"/>
        <dbReference type="ChEBI" id="CHEBI:43474"/>
        <dbReference type="ChEBI" id="CHEBI:83421"/>
        <dbReference type="EC" id="3.1.3.16"/>
    </reaction>
</comment>
<comment type="catalytic activity">
    <reaction>
        <text>O-phospho-L-threonyl-[protein] + H2O = L-threonyl-[protein] + phosphate</text>
        <dbReference type="Rhea" id="RHEA:47004"/>
        <dbReference type="Rhea" id="RHEA-COMP:11060"/>
        <dbReference type="Rhea" id="RHEA-COMP:11605"/>
        <dbReference type="ChEBI" id="CHEBI:15377"/>
        <dbReference type="ChEBI" id="CHEBI:30013"/>
        <dbReference type="ChEBI" id="CHEBI:43474"/>
        <dbReference type="ChEBI" id="CHEBI:61977"/>
        <dbReference type="EC" id="3.1.3.16"/>
    </reaction>
</comment>
<comment type="cofactor">
    <cofactor evidence="1">
        <name>Mg(2+)</name>
        <dbReference type="ChEBI" id="CHEBI:18420"/>
    </cofactor>
    <cofactor evidence="1">
        <name>Mn(2+)</name>
        <dbReference type="ChEBI" id="CHEBI:29035"/>
    </cofactor>
    <text evidence="1">Binds 2 magnesium or manganese ions per subunit.</text>
</comment>
<comment type="similarity">
    <text evidence="4">Belongs to the PP2C family.</text>
</comment>
<keyword id="KW-0378">Hydrolase</keyword>
<keyword id="KW-0460">Magnesium</keyword>
<keyword id="KW-0464">Manganese</keyword>
<keyword id="KW-0479">Metal-binding</keyword>
<keyword id="KW-0904">Protein phosphatase</keyword>
<keyword id="KW-1185">Reference proteome</keyword>
<evidence type="ECO:0000250" key="1"/>
<evidence type="ECO:0000255" key="2">
    <source>
        <dbReference type="PROSITE-ProRule" id="PRU01082"/>
    </source>
</evidence>
<evidence type="ECO:0000256" key="3">
    <source>
        <dbReference type="SAM" id="MobiDB-lite"/>
    </source>
</evidence>
<evidence type="ECO:0000305" key="4"/>
<accession>O81716</accession>
<proteinExistence type="evidence at protein level"/>
<dbReference type="EC" id="3.1.3.16"/>
<dbReference type="EMBL" id="AB079671">
    <property type="protein sequence ID" value="BAB84700.1"/>
    <property type="molecule type" value="mRNA"/>
</dbReference>
<dbReference type="EMBL" id="AC006585">
    <property type="protein sequence ID" value="AAD23006.1"/>
    <property type="molecule type" value="Genomic_DNA"/>
</dbReference>
<dbReference type="EMBL" id="CP002685">
    <property type="protein sequence ID" value="AEC07654.1"/>
    <property type="molecule type" value="Genomic_DNA"/>
</dbReference>
<dbReference type="EMBL" id="CP002685">
    <property type="protein sequence ID" value="ANM62333.1"/>
    <property type="molecule type" value="Genomic_DNA"/>
</dbReference>
<dbReference type="EMBL" id="AY050873">
    <property type="protein sequence ID" value="AAK92810.1"/>
    <property type="molecule type" value="mRNA"/>
</dbReference>
<dbReference type="EMBL" id="AY091209">
    <property type="protein sequence ID" value="AAM14148.1"/>
    <property type="molecule type" value="mRNA"/>
</dbReference>
<dbReference type="PIR" id="H84643">
    <property type="entry name" value="H84643"/>
</dbReference>
<dbReference type="RefSeq" id="NP_001324497.1">
    <property type="nucleotide sequence ID" value="NM_001335973.1"/>
</dbReference>
<dbReference type="RefSeq" id="NP_180079.1">
    <property type="nucleotide sequence ID" value="NM_128064.3"/>
</dbReference>
<dbReference type="SMR" id="O81716"/>
<dbReference type="BioGRID" id="2397">
    <property type="interactions" value="1"/>
</dbReference>
<dbReference type="FunCoup" id="O81716">
    <property type="interactions" value="4644"/>
</dbReference>
<dbReference type="IntAct" id="O81716">
    <property type="interactions" value="2"/>
</dbReference>
<dbReference type="MINT" id="O81716"/>
<dbReference type="STRING" id="3702.O81716"/>
<dbReference type="GlyGen" id="O81716">
    <property type="glycosylation" value="1 site"/>
</dbReference>
<dbReference type="iPTMnet" id="O81716"/>
<dbReference type="PaxDb" id="3702-AT2G25070.1"/>
<dbReference type="ProteomicsDB" id="248705"/>
<dbReference type="EnsemblPlants" id="AT2G25070.1">
    <property type="protein sequence ID" value="AT2G25070.1"/>
    <property type="gene ID" value="AT2G25070"/>
</dbReference>
<dbReference type="EnsemblPlants" id="AT2G25070.2">
    <property type="protein sequence ID" value="AT2G25070.2"/>
    <property type="gene ID" value="AT2G25070"/>
</dbReference>
<dbReference type="GeneID" id="817045"/>
<dbReference type="Gramene" id="AT2G25070.1">
    <property type="protein sequence ID" value="AT2G25070.1"/>
    <property type="gene ID" value="AT2G25070"/>
</dbReference>
<dbReference type="Gramene" id="AT2G25070.2">
    <property type="protein sequence ID" value="AT2G25070.2"/>
    <property type="gene ID" value="AT2G25070"/>
</dbReference>
<dbReference type="KEGG" id="ath:AT2G25070"/>
<dbReference type="Araport" id="AT2G25070"/>
<dbReference type="TAIR" id="AT2G25070"/>
<dbReference type="eggNOG" id="KOG0698">
    <property type="taxonomic scope" value="Eukaryota"/>
</dbReference>
<dbReference type="HOGENOM" id="CLU_013173_4_1_1"/>
<dbReference type="InParanoid" id="O81716"/>
<dbReference type="OMA" id="WGRVNAN"/>
<dbReference type="OrthoDB" id="10264738at2759"/>
<dbReference type="PhylomeDB" id="O81716"/>
<dbReference type="PRO" id="PR:O81716"/>
<dbReference type="Proteomes" id="UP000006548">
    <property type="component" value="Chromosome 2"/>
</dbReference>
<dbReference type="ExpressionAtlas" id="O81716">
    <property type="expression patterns" value="baseline and differential"/>
</dbReference>
<dbReference type="GO" id="GO:0005773">
    <property type="term" value="C:vacuole"/>
    <property type="evidence" value="ECO:0007005"/>
    <property type="project" value="TAIR"/>
</dbReference>
<dbReference type="GO" id="GO:0046872">
    <property type="term" value="F:metal ion binding"/>
    <property type="evidence" value="ECO:0007669"/>
    <property type="project" value="UniProtKB-KW"/>
</dbReference>
<dbReference type="GO" id="GO:0004722">
    <property type="term" value="F:protein serine/threonine phosphatase activity"/>
    <property type="evidence" value="ECO:0007669"/>
    <property type="project" value="UniProtKB-EC"/>
</dbReference>
<dbReference type="CDD" id="cd00143">
    <property type="entry name" value="PP2Cc"/>
    <property type="match status" value="1"/>
</dbReference>
<dbReference type="Gene3D" id="3.60.40.10">
    <property type="entry name" value="PPM-type phosphatase domain"/>
    <property type="match status" value="1"/>
</dbReference>
<dbReference type="InterPro" id="IPR015655">
    <property type="entry name" value="PP2C"/>
</dbReference>
<dbReference type="InterPro" id="IPR000222">
    <property type="entry name" value="PP2C_BS"/>
</dbReference>
<dbReference type="InterPro" id="IPR036457">
    <property type="entry name" value="PPM-type-like_dom_sf"/>
</dbReference>
<dbReference type="InterPro" id="IPR001932">
    <property type="entry name" value="PPM-type_phosphatase-like_dom"/>
</dbReference>
<dbReference type="PANTHER" id="PTHR13832">
    <property type="entry name" value="PROTEIN PHOSPHATASE 2C"/>
    <property type="match status" value="1"/>
</dbReference>
<dbReference type="PANTHER" id="PTHR13832:SF631">
    <property type="entry name" value="PROTEIN PHOSPHATASE 2C 21-RELATED"/>
    <property type="match status" value="1"/>
</dbReference>
<dbReference type="Pfam" id="PF00481">
    <property type="entry name" value="PP2C"/>
    <property type="match status" value="2"/>
</dbReference>
<dbReference type="SMART" id="SM00331">
    <property type="entry name" value="PP2C_SIG"/>
    <property type="match status" value="1"/>
</dbReference>
<dbReference type="SMART" id="SM00332">
    <property type="entry name" value="PP2Cc"/>
    <property type="match status" value="1"/>
</dbReference>
<dbReference type="SUPFAM" id="SSF81606">
    <property type="entry name" value="PP2C-like"/>
    <property type="match status" value="1"/>
</dbReference>
<dbReference type="PROSITE" id="PS01032">
    <property type="entry name" value="PPM_1"/>
    <property type="match status" value="1"/>
</dbReference>
<dbReference type="PROSITE" id="PS51746">
    <property type="entry name" value="PPM_2"/>
    <property type="match status" value="1"/>
</dbReference>
<feature type="chain" id="PRO_0000367951" description="Probable protein phosphatase 2C 21">
    <location>
        <begin position="1"/>
        <end position="355"/>
    </location>
</feature>
<feature type="domain" description="PPM-type phosphatase" evidence="2">
    <location>
        <begin position="23"/>
        <end position="329"/>
    </location>
</feature>
<feature type="region of interest" description="Disordered" evidence="3">
    <location>
        <begin position="329"/>
        <end position="355"/>
    </location>
</feature>
<feature type="binding site" evidence="1">
    <location>
        <position position="57"/>
    </location>
    <ligand>
        <name>Mn(2+)</name>
        <dbReference type="ChEBI" id="CHEBI:29035"/>
        <label>1</label>
    </ligand>
</feature>
<feature type="binding site" evidence="1">
    <location>
        <position position="57"/>
    </location>
    <ligand>
        <name>Mn(2+)</name>
        <dbReference type="ChEBI" id="CHEBI:29035"/>
        <label>2</label>
    </ligand>
</feature>
<feature type="binding site" evidence="1">
    <location>
        <position position="58"/>
    </location>
    <ligand>
        <name>Mn(2+)</name>
        <dbReference type="ChEBI" id="CHEBI:29035"/>
        <label>1</label>
    </ligand>
</feature>
<feature type="binding site" evidence="1">
    <location>
        <position position="272"/>
    </location>
    <ligand>
        <name>Mn(2+)</name>
        <dbReference type="ChEBI" id="CHEBI:29035"/>
        <label>2</label>
    </ligand>
</feature>
<feature type="binding site" evidence="1">
    <location>
        <position position="320"/>
    </location>
    <ligand>
        <name>Mn(2+)</name>
        <dbReference type="ChEBI" id="CHEBI:29035"/>
        <label>2</label>
    </ligand>
</feature>
<protein>
    <recommendedName>
        <fullName>Probable protein phosphatase 2C 21</fullName>
        <shortName>AtPP2C21</shortName>
        <ecNumber>3.1.3.16</ecNumber>
    </recommendedName>
    <alternativeName>
        <fullName>AtPPC4;2</fullName>
    </alternativeName>
</protein>
<sequence>MGTYLSSPKTEKLSEDGENDKLRFGLSSMQGWRATMEDAHAAILDLDDKTSFFGVYDGHGGKVVAKFCAKYLHQQVISNEAYKTGDVETSLRRAFFRMDDMMQGQRGWRELAVLGDKMNKFSGMIEGFIWSPRSGDTNNQPDSWPLEDGPHSDFTGPTSGCTACVALIKDKKLFVANAGDSRCVISRKSQAYNLSKDHKPDLEVEKERILKAGGFIHAGRINGSLNLTRAIGDMEFKQNKFLPSEKQMVTADPDINTIDLCDDDDFLVVACDGIWDCMSSQELVDFIHEQLKSETKLSTVCEKVVDRCLAPDTATGEGCDNMTIILVQFKKPNPSETEPEDSKPEPSEDEPSSSS</sequence>
<organism>
    <name type="scientific">Arabidopsis thaliana</name>
    <name type="common">Mouse-ear cress</name>
    <dbReference type="NCBI Taxonomy" id="3702"/>
    <lineage>
        <taxon>Eukaryota</taxon>
        <taxon>Viridiplantae</taxon>
        <taxon>Streptophyta</taxon>
        <taxon>Embryophyta</taxon>
        <taxon>Tracheophyta</taxon>
        <taxon>Spermatophyta</taxon>
        <taxon>Magnoliopsida</taxon>
        <taxon>eudicotyledons</taxon>
        <taxon>Gunneridae</taxon>
        <taxon>Pentapetalae</taxon>
        <taxon>rosids</taxon>
        <taxon>malvids</taxon>
        <taxon>Brassicales</taxon>
        <taxon>Brassicaceae</taxon>
        <taxon>Camelineae</taxon>
        <taxon>Arabidopsis</taxon>
    </lineage>
</organism>
<name>P2C21_ARATH</name>
<reference key="1">
    <citation type="submission" date="2002-02" db="EMBL/GenBank/DDBJ databases">
        <title>Substrate specificity of type 2C protein phosphatases (PP2C) in Arabidopsis thaliana.</title>
        <authorList>
            <person name="Izumi S."/>
            <person name="Yamada M."/>
            <person name="Ohsato H."/>
            <person name="Miyazaki S."/>
            <person name="Bohnert H.J."/>
            <person name="Fukuhara T."/>
        </authorList>
    </citation>
    <scope>NUCLEOTIDE SEQUENCE [MRNA]</scope>
</reference>
<reference key="2">
    <citation type="journal article" date="1999" name="Nature">
        <title>Sequence and analysis of chromosome 2 of the plant Arabidopsis thaliana.</title>
        <authorList>
            <person name="Lin X."/>
            <person name="Kaul S."/>
            <person name="Rounsley S.D."/>
            <person name="Shea T.P."/>
            <person name="Benito M.-I."/>
            <person name="Town C.D."/>
            <person name="Fujii C.Y."/>
            <person name="Mason T.M."/>
            <person name="Bowman C.L."/>
            <person name="Barnstead M.E."/>
            <person name="Feldblyum T.V."/>
            <person name="Buell C.R."/>
            <person name="Ketchum K.A."/>
            <person name="Lee J.J."/>
            <person name="Ronning C.M."/>
            <person name="Koo H.L."/>
            <person name="Moffat K.S."/>
            <person name="Cronin L.A."/>
            <person name="Shen M."/>
            <person name="Pai G."/>
            <person name="Van Aken S."/>
            <person name="Umayam L."/>
            <person name="Tallon L.J."/>
            <person name="Gill J.E."/>
            <person name="Adams M.D."/>
            <person name="Carrera A.J."/>
            <person name="Creasy T.H."/>
            <person name="Goodman H.M."/>
            <person name="Somerville C.R."/>
            <person name="Copenhaver G.P."/>
            <person name="Preuss D."/>
            <person name="Nierman W.C."/>
            <person name="White O."/>
            <person name="Eisen J.A."/>
            <person name="Salzberg S.L."/>
            <person name="Fraser C.M."/>
            <person name="Venter J.C."/>
        </authorList>
    </citation>
    <scope>NUCLEOTIDE SEQUENCE [LARGE SCALE GENOMIC DNA]</scope>
    <source>
        <strain>cv. Columbia</strain>
    </source>
</reference>
<reference key="3">
    <citation type="journal article" date="2017" name="Plant J.">
        <title>Araport11: a complete reannotation of the Arabidopsis thaliana reference genome.</title>
        <authorList>
            <person name="Cheng C.Y."/>
            <person name="Krishnakumar V."/>
            <person name="Chan A.P."/>
            <person name="Thibaud-Nissen F."/>
            <person name="Schobel S."/>
            <person name="Town C.D."/>
        </authorList>
    </citation>
    <scope>GENOME REANNOTATION</scope>
    <source>
        <strain>cv. Columbia</strain>
    </source>
</reference>
<reference key="4">
    <citation type="journal article" date="2003" name="Science">
        <title>Empirical analysis of transcriptional activity in the Arabidopsis genome.</title>
        <authorList>
            <person name="Yamada K."/>
            <person name="Lim J."/>
            <person name="Dale J.M."/>
            <person name="Chen H."/>
            <person name="Shinn P."/>
            <person name="Palm C.J."/>
            <person name="Southwick A.M."/>
            <person name="Wu H.C."/>
            <person name="Kim C.J."/>
            <person name="Nguyen M."/>
            <person name="Pham P.K."/>
            <person name="Cheuk R.F."/>
            <person name="Karlin-Newmann G."/>
            <person name="Liu S.X."/>
            <person name="Lam B."/>
            <person name="Sakano H."/>
            <person name="Wu T."/>
            <person name="Yu G."/>
            <person name="Miranda M."/>
            <person name="Quach H.L."/>
            <person name="Tripp M."/>
            <person name="Chang C.H."/>
            <person name="Lee J.M."/>
            <person name="Toriumi M.J."/>
            <person name="Chan M.M."/>
            <person name="Tang C.C."/>
            <person name="Onodera C.S."/>
            <person name="Deng J.M."/>
            <person name="Akiyama K."/>
            <person name="Ansari Y."/>
            <person name="Arakawa T."/>
            <person name="Banh J."/>
            <person name="Banno F."/>
            <person name="Bowser L."/>
            <person name="Brooks S.Y."/>
            <person name="Carninci P."/>
            <person name="Chao Q."/>
            <person name="Choy N."/>
            <person name="Enju A."/>
            <person name="Goldsmith A.D."/>
            <person name="Gurjal M."/>
            <person name="Hansen N.F."/>
            <person name="Hayashizaki Y."/>
            <person name="Johnson-Hopson C."/>
            <person name="Hsuan V.W."/>
            <person name="Iida K."/>
            <person name="Karnes M."/>
            <person name="Khan S."/>
            <person name="Koesema E."/>
            <person name="Ishida J."/>
            <person name="Jiang P.X."/>
            <person name="Jones T."/>
            <person name="Kawai J."/>
            <person name="Kamiya A."/>
            <person name="Meyers C."/>
            <person name="Nakajima M."/>
            <person name="Narusaka M."/>
            <person name="Seki M."/>
            <person name="Sakurai T."/>
            <person name="Satou M."/>
            <person name="Tamse R."/>
            <person name="Vaysberg M."/>
            <person name="Wallender E.K."/>
            <person name="Wong C."/>
            <person name="Yamamura Y."/>
            <person name="Yuan S."/>
            <person name="Shinozaki K."/>
            <person name="Davis R.W."/>
            <person name="Theologis A."/>
            <person name="Ecker J.R."/>
        </authorList>
    </citation>
    <scope>NUCLEOTIDE SEQUENCE [LARGE SCALE MRNA]</scope>
    <source>
        <strain>cv. Columbia</strain>
    </source>
</reference>
<reference key="5">
    <citation type="journal article" date="2008" name="BMC Genomics">
        <title>Genome-wide and expression analysis of protein phosphatase 2C in rice and Arabidopsis.</title>
        <authorList>
            <person name="Xue T."/>
            <person name="Wang D."/>
            <person name="Zhang S."/>
            <person name="Ehlting J."/>
            <person name="Ni F."/>
            <person name="Jacab S."/>
            <person name="Zheng C."/>
            <person name="Zhong Y."/>
        </authorList>
    </citation>
    <scope>GENE FAMILY</scope>
    <scope>NOMENCLATURE</scope>
</reference>
<reference key="6">
    <citation type="journal article" date="2009" name="Plant Physiol.">
        <title>Large-scale Arabidopsis phosphoproteome profiling reveals novel chloroplast kinase substrates and phosphorylation networks.</title>
        <authorList>
            <person name="Reiland S."/>
            <person name="Messerli G."/>
            <person name="Baerenfaller K."/>
            <person name="Gerrits B."/>
            <person name="Endler A."/>
            <person name="Grossmann J."/>
            <person name="Gruissem W."/>
            <person name="Baginsky S."/>
        </authorList>
    </citation>
    <scope>IDENTIFICATION BY MASS SPECTROMETRY [LARGE SCALE ANALYSIS]</scope>
</reference>